<organism>
    <name type="scientific">Homo sapiens</name>
    <name type="common">Human</name>
    <dbReference type="NCBI Taxonomy" id="9606"/>
    <lineage>
        <taxon>Eukaryota</taxon>
        <taxon>Metazoa</taxon>
        <taxon>Chordata</taxon>
        <taxon>Craniata</taxon>
        <taxon>Vertebrata</taxon>
        <taxon>Euteleostomi</taxon>
        <taxon>Mammalia</taxon>
        <taxon>Eutheria</taxon>
        <taxon>Euarchontoglires</taxon>
        <taxon>Primates</taxon>
        <taxon>Haplorrhini</taxon>
        <taxon>Catarrhini</taxon>
        <taxon>Hominidae</taxon>
        <taxon>Homo</taxon>
    </lineage>
</organism>
<protein>
    <recommendedName>
        <fullName>Replication factor C subunit 1</fullName>
    </recommendedName>
    <alternativeName>
        <fullName>Activator 1 140 kDa subunit</fullName>
        <shortName>A1 140 kDa subunit</shortName>
    </alternativeName>
    <alternativeName>
        <fullName>Activator 1 large subunit</fullName>
    </alternativeName>
    <alternativeName>
        <fullName>Activator 1 subunit 1</fullName>
    </alternativeName>
    <alternativeName>
        <fullName>DNA-binding protein PO-GA</fullName>
    </alternativeName>
    <alternativeName>
        <fullName>Replication factor C 140 kDa subunit</fullName>
        <shortName>RF-C 140 kDa subunit</shortName>
        <shortName>RFC140</shortName>
    </alternativeName>
    <alternativeName>
        <fullName>Replication factor C large subunit</fullName>
    </alternativeName>
</protein>
<proteinExistence type="evidence at protein level"/>
<sequence>MDIRKFFGVIPSGKKLVSETVKKNEKTKSDEETLKAKKGIKEIKVNSSRKEDDFKQKQPSKKKRIIYDSDSESEETLQVKNAKKPPEKLPVSSKPGKISRQDPVTYISETDEEDDFMCKKAASKSKENGRSTNSHLGTSNMKKNEENTKTKNKPLSPIKLTPTSVLDYFGTGSVQRSNKKMVASKRKELSQNTDESGLNDEAIAKQLQLDEDAELERQLHEDEEFARTLAMLDEEPKTKKARKDTEAGETFSSVQANLSKAEKHKYPHKVKTAQVSDERKSYSPRKQSKYESSKESQQHSKSSADKIGEVSSPKASSKLAIMKRKEESSYKEIEPVASKRKENAIKLKGETKTPKKTKSSPAKKESVSPEDSEKKRTNYQAYRSYLNREGPKALGSKEIPKGAENCLEGLIFVITGVLESIERDEAKSLIERYGGKVTGNVSKKTNYLVMGRDSGQSKSDKAAALGTKIIDEDGLLNLIRTMPGKKSKYEIAVETEMKKESKLERTPQKNVQGKRKISPSKKESESKKSRPTSKRDSLAKTIKKETDVFWKSLDFKEQVAEETSGDSKARNLADDSSENKVENLLWVDKYKPTSLKTIIGQQGDQSCANKLLRWLRNWQKSSSEDKKHAAKFGKFSGKDDGSSFKAALLSGPPGVGKTTTASLVCQELGYSYVELNASDTRSKSSLKAIVAESLNNTSIKGFYSNGAASSVSTKHALIMDEVDGMAGNEDRGGIQELIGLIKHTKIPIICMCNDRNHPKIRSLVHYCFDLRFQRPRVEQIKGAMMSIAFKEGLKIPPPAMNEIILGANQDIRQVLHNLSMWCARSKALTYDQAKADSHRAKKDIKMGPFDVARKVFAAGEETAHMSLVDKSDLFFHDYSIAPLFVQENYIHVKPVAAGGDMKKHLMLLSRAADSICDGDLVDSQIRSKQNWSLLPAQAIYASVLPGELMRGYMTQFPTFPSWLGKHSSTGKHDRIVQDLALHMSLRTYSSKRTVNMDYLSLLRDALVQPLTSQGVDGVQDVVALMDTYYLMKEDFENIMEISSWGGKPSPFSKLDPKVKAAFTRAYNKEAHLTPYSLQAIKASRHSTSPSLDSEYNEELNEDDSQSDEKDQDAIETDAMIKKKTKSSKPSKPEKDKEPRKGKGKSSKK</sequence>
<comment type="function">
    <text evidence="9 10">Subunit of the replication factor C (RFC) complex which acts during elongation of primed DNA templates by DNA polymerases delta and epsilon, and is necessary for ATP-dependent loading of proliferating cell nuclear antigen (PCNA) onto primed DNA (PubMed:9488738). This subunit binds to the primer-template junction. Binds the PO-B transcription element as well as other GA rich DNA sequences. Can bind single- or double-stranded DNA.</text>
</comment>
<comment type="subunit">
    <text evidence="9">Large subunit of the RFC complex, an heteropentameric complex consisting of RFC1 and four small subunits RFC2, RFC3, RFC4 and RFC5; the RFC complex interacts with PCNA and the interaction involves RFC1 (PubMed:8999859, PubMed:9488738).</text>
</comment>
<comment type="interaction">
    <interactant intactId="EBI-476616">
        <id>P35251</id>
    </interactant>
    <interactant intactId="EBI-476409">
        <id>P35250</id>
        <label>RFC2</label>
    </interactant>
    <organismsDiffer>false</organismsDiffer>
    <experiments>4</experiments>
</comment>
<comment type="subcellular location">
    <subcellularLocation>
        <location>Nucleus</location>
    </subcellularLocation>
</comment>
<comment type="alternative products">
    <event type="alternative splicing"/>
    <isoform>
        <id>P35251-1</id>
        <name>1</name>
        <sequence type="displayed"/>
    </isoform>
    <isoform>
        <id>P35251-2</id>
        <name>2</name>
        <sequence type="described" ref="VSP_008443"/>
    </isoform>
</comment>
<comment type="tissue specificity">
    <text>Wide tissue distribution. Undetectable in placental tissue.</text>
</comment>
<comment type="disease" evidence="5 6">
    <disease id="DI-05548">
        <name>Cerebellar ataxia, neuropathy, and vestibular areflexia syndrome</name>
        <acronym>CANVAS</acronym>
        <description>An autosomal recessive neurologic disease characterized by imbalance, cerebellar ataxia, impaired vestibular function, and non-length-dependent sensory deficit.</description>
        <dbReference type="MIM" id="614575"/>
    </disease>
    <text evidence="5 6">The disease is caused by variants affecting the gene represented in this entry. The disease is caused by intronic AAGGG repeat expansions in intron 2.</text>
</comment>
<comment type="miscellaneous">
    <molecule>Isoform 2</molecule>
    <text evidence="15">Alternative use of an acceptor site.</text>
</comment>
<comment type="similarity">
    <text evidence="15">Belongs to the activator 1 large subunit family.</text>
</comment>
<dbReference type="EMBL" id="L23320">
    <property type="protein sequence ID" value="AAA16121.1"/>
    <property type="molecule type" value="mRNA"/>
</dbReference>
<dbReference type="EMBL" id="Z22642">
    <property type="protein sequence ID" value="CAA80355.1"/>
    <property type="molecule type" value="mRNA"/>
</dbReference>
<dbReference type="EMBL" id="AF040250">
    <property type="protein sequence ID" value="AAB99788.1"/>
    <property type="molecule type" value="mRNA"/>
</dbReference>
<dbReference type="EMBL" id="AY600371">
    <property type="protein sequence ID" value="AAS94325.1"/>
    <property type="molecule type" value="Genomic_DNA"/>
</dbReference>
<dbReference type="EMBL" id="AK291612">
    <property type="protein sequence ID" value="BAF84301.1"/>
    <property type="molecule type" value="mRNA"/>
</dbReference>
<dbReference type="EMBL" id="CH471069">
    <property type="protein sequence ID" value="EAW92923.1"/>
    <property type="molecule type" value="Genomic_DNA"/>
</dbReference>
<dbReference type="EMBL" id="BC035297">
    <property type="protein sequence ID" value="AAH35297.1"/>
    <property type="molecule type" value="mRNA"/>
</dbReference>
<dbReference type="EMBL" id="BC051751">
    <property type="protein sequence ID" value="AAH51751.1"/>
    <property type="molecule type" value="mRNA"/>
</dbReference>
<dbReference type="EMBL" id="BC051786">
    <property type="protein sequence ID" value="AAH51786.1"/>
    <property type="molecule type" value="mRNA"/>
</dbReference>
<dbReference type="CCDS" id="CCDS3450.1">
    <molecule id="P35251-2"/>
</dbReference>
<dbReference type="CCDS" id="CCDS56329.1">
    <molecule id="P35251-1"/>
</dbReference>
<dbReference type="PIR" id="A49651">
    <property type="entry name" value="A49651"/>
</dbReference>
<dbReference type="PIR" id="JN0599">
    <property type="entry name" value="JN0599"/>
</dbReference>
<dbReference type="RefSeq" id="NP_001191676.1">
    <molecule id="P35251-1"/>
    <property type="nucleotide sequence ID" value="NM_001204747.2"/>
</dbReference>
<dbReference type="RefSeq" id="NP_002904.3">
    <molecule id="P35251-2"/>
    <property type="nucleotide sequence ID" value="NM_002913.4"/>
</dbReference>
<dbReference type="RefSeq" id="XP_054206654.1">
    <molecule id="P35251-1"/>
    <property type="nucleotide sequence ID" value="XM_054350679.1"/>
</dbReference>
<dbReference type="RefSeq" id="XP_054206655.1">
    <molecule id="P35251-2"/>
    <property type="nucleotide sequence ID" value="XM_054350680.1"/>
</dbReference>
<dbReference type="PDB" id="2EBU">
    <property type="method" value="NMR"/>
    <property type="chains" value="A=392-496"/>
</dbReference>
<dbReference type="PDB" id="2K6G">
    <property type="method" value="NMR"/>
    <property type="chains" value="A=375-480"/>
</dbReference>
<dbReference type="PDB" id="2K7F">
    <property type="method" value="NMR"/>
    <property type="chains" value="A=375-480"/>
</dbReference>
<dbReference type="PDB" id="6VVO">
    <property type="method" value="EM"/>
    <property type="resolution" value="3.40 A"/>
    <property type="chains" value="A=556-1148"/>
</dbReference>
<dbReference type="PDBsum" id="2EBU"/>
<dbReference type="PDBsum" id="2K6G"/>
<dbReference type="PDBsum" id="2K7F"/>
<dbReference type="PDBsum" id="6VVO"/>
<dbReference type="BMRB" id="P35251"/>
<dbReference type="EMDB" id="EMD-21405"/>
<dbReference type="SMR" id="P35251"/>
<dbReference type="BioGRID" id="111913">
    <property type="interactions" value="249"/>
</dbReference>
<dbReference type="ComplexPortal" id="CPX-415">
    <property type="entry name" value="DNA replication factor C complex"/>
</dbReference>
<dbReference type="CORUM" id="P35251"/>
<dbReference type="FunCoup" id="P35251">
    <property type="interactions" value="3381"/>
</dbReference>
<dbReference type="IntAct" id="P35251">
    <property type="interactions" value="99"/>
</dbReference>
<dbReference type="MINT" id="P35251"/>
<dbReference type="STRING" id="9606.ENSP00000371321"/>
<dbReference type="GlyGen" id="P35251">
    <property type="glycosylation" value="1 site, 1 O-linked glycan (1 site)"/>
</dbReference>
<dbReference type="iPTMnet" id="P35251"/>
<dbReference type="PhosphoSitePlus" id="P35251"/>
<dbReference type="SwissPalm" id="P35251"/>
<dbReference type="BioMuta" id="RFC1"/>
<dbReference type="DMDM" id="56757608"/>
<dbReference type="jPOST" id="P35251"/>
<dbReference type="MassIVE" id="P35251"/>
<dbReference type="PaxDb" id="9606-ENSP00000371321"/>
<dbReference type="PeptideAtlas" id="P35251"/>
<dbReference type="ProteomicsDB" id="55016">
    <molecule id="P35251-1"/>
</dbReference>
<dbReference type="ProteomicsDB" id="55017">
    <molecule id="P35251-2"/>
</dbReference>
<dbReference type="Pumba" id="P35251"/>
<dbReference type="Antibodypedia" id="4019">
    <property type="antibodies" value="261 antibodies from 31 providers"/>
</dbReference>
<dbReference type="DNASU" id="5981"/>
<dbReference type="Ensembl" id="ENST00000349703.7">
    <molecule id="P35251-2"/>
    <property type="protein sequence ID" value="ENSP00000261424.4"/>
    <property type="gene ID" value="ENSG00000035928.17"/>
</dbReference>
<dbReference type="Ensembl" id="ENST00000381897.5">
    <molecule id="P35251-1"/>
    <property type="protein sequence ID" value="ENSP00000371321.1"/>
    <property type="gene ID" value="ENSG00000035928.17"/>
</dbReference>
<dbReference type="GeneID" id="5981"/>
<dbReference type="KEGG" id="hsa:5981"/>
<dbReference type="MANE-Select" id="ENST00000349703.7">
    <molecule id="P35251-2"/>
    <property type="protein sequence ID" value="ENSP00000261424.4"/>
    <property type="RefSeq nucleotide sequence ID" value="NM_002913.5"/>
    <property type="RefSeq protein sequence ID" value="NP_002904.3"/>
</dbReference>
<dbReference type="UCSC" id="uc003gtx.3">
    <molecule id="P35251-1"/>
    <property type="organism name" value="human"/>
</dbReference>
<dbReference type="AGR" id="HGNC:9969"/>
<dbReference type="CTD" id="5981"/>
<dbReference type="DisGeNET" id="5981"/>
<dbReference type="GeneCards" id="RFC1"/>
<dbReference type="GeneReviews" id="RFC1"/>
<dbReference type="HGNC" id="HGNC:9969">
    <property type="gene designation" value="RFC1"/>
</dbReference>
<dbReference type="HPA" id="ENSG00000035928">
    <property type="expression patterns" value="Low tissue specificity"/>
</dbReference>
<dbReference type="MalaCards" id="RFC1"/>
<dbReference type="MIM" id="102579">
    <property type="type" value="gene"/>
</dbReference>
<dbReference type="MIM" id="614575">
    <property type="type" value="phenotype"/>
</dbReference>
<dbReference type="neXtProt" id="NX_P35251"/>
<dbReference type="OpenTargets" id="ENSG00000035928"/>
<dbReference type="Orphanet" id="504476">
    <property type="disease" value="Cerebellar ataxia with neuropathy and bilateral vestibular areflexia syndrome"/>
</dbReference>
<dbReference type="PharmGKB" id="PA34338"/>
<dbReference type="VEuPathDB" id="HostDB:ENSG00000035928"/>
<dbReference type="eggNOG" id="KOG1968">
    <property type="taxonomic scope" value="Eukaryota"/>
</dbReference>
<dbReference type="GeneTree" id="ENSGT00730000111066"/>
<dbReference type="HOGENOM" id="CLU_003574_0_0_1"/>
<dbReference type="InParanoid" id="P35251"/>
<dbReference type="OMA" id="LICNERN"/>
<dbReference type="OrthoDB" id="446168at2759"/>
<dbReference type="PAN-GO" id="P35251">
    <property type="GO annotations" value="3 GO annotations based on evolutionary models"/>
</dbReference>
<dbReference type="PhylomeDB" id="P35251"/>
<dbReference type="TreeFam" id="TF105722"/>
<dbReference type="BRENDA" id="3.6.4.B8">
    <property type="organism ID" value="2681"/>
</dbReference>
<dbReference type="PathwayCommons" id="P35251"/>
<dbReference type="Reactome" id="R-HSA-110312">
    <property type="pathway name" value="Translesion synthesis by REV1"/>
</dbReference>
<dbReference type="Reactome" id="R-HSA-110314">
    <property type="pathway name" value="Recognition of DNA damage by PCNA-containing replication complex"/>
</dbReference>
<dbReference type="Reactome" id="R-HSA-110320">
    <property type="pathway name" value="Translesion Synthesis by POLH"/>
</dbReference>
<dbReference type="Reactome" id="R-HSA-174411">
    <property type="pathway name" value="Polymerase switching on the C-strand of the telomere"/>
</dbReference>
<dbReference type="Reactome" id="R-HSA-5651801">
    <property type="pathway name" value="PCNA-Dependent Long Patch Base Excision Repair"/>
</dbReference>
<dbReference type="Reactome" id="R-HSA-5655862">
    <property type="pathway name" value="Translesion synthesis by POLK"/>
</dbReference>
<dbReference type="Reactome" id="R-HSA-5656121">
    <property type="pathway name" value="Translesion synthesis by POLI"/>
</dbReference>
<dbReference type="Reactome" id="R-HSA-5656169">
    <property type="pathway name" value="Termination of translesion DNA synthesis"/>
</dbReference>
<dbReference type="Reactome" id="R-HSA-5685942">
    <property type="pathway name" value="HDR through Homologous Recombination (HRR)"/>
</dbReference>
<dbReference type="Reactome" id="R-HSA-5696397">
    <property type="pathway name" value="Gap-filling DNA repair synthesis and ligation in GG-NER"/>
</dbReference>
<dbReference type="Reactome" id="R-HSA-5696400">
    <property type="pathway name" value="Dual Incision in GG-NER"/>
</dbReference>
<dbReference type="Reactome" id="R-HSA-6782135">
    <property type="pathway name" value="Dual incision in TC-NER"/>
</dbReference>
<dbReference type="Reactome" id="R-HSA-6782210">
    <property type="pathway name" value="Gap-filling DNA repair synthesis and ligation in TC-NER"/>
</dbReference>
<dbReference type="Reactome" id="R-HSA-69091">
    <property type="pathway name" value="Polymerase switching"/>
</dbReference>
<dbReference type="SignaLink" id="P35251"/>
<dbReference type="SIGNOR" id="P35251"/>
<dbReference type="BioGRID-ORCS" id="5981">
    <property type="hits" value="307 hits in 1160 CRISPR screens"/>
</dbReference>
<dbReference type="CD-CODE" id="232F8A39">
    <property type="entry name" value="P-body"/>
</dbReference>
<dbReference type="CD-CODE" id="91857CE7">
    <property type="entry name" value="Nucleolus"/>
</dbReference>
<dbReference type="ChiTaRS" id="RFC1">
    <property type="organism name" value="human"/>
</dbReference>
<dbReference type="EvolutionaryTrace" id="P35251"/>
<dbReference type="GeneWiki" id="RFC1"/>
<dbReference type="GenomeRNAi" id="5981"/>
<dbReference type="Pharos" id="P35251">
    <property type="development level" value="Tbio"/>
</dbReference>
<dbReference type="PRO" id="PR:P35251"/>
<dbReference type="Proteomes" id="UP000005640">
    <property type="component" value="Chromosome 4"/>
</dbReference>
<dbReference type="RNAct" id="P35251">
    <property type="molecule type" value="protein"/>
</dbReference>
<dbReference type="Bgee" id="ENSG00000035928">
    <property type="expression patterns" value="Expressed in calcaneal tendon and 190 other cell types or tissues"/>
</dbReference>
<dbReference type="ExpressionAtlas" id="P35251">
    <property type="expression patterns" value="baseline and differential"/>
</dbReference>
<dbReference type="GO" id="GO:0005663">
    <property type="term" value="C:DNA replication factor C complex"/>
    <property type="evidence" value="ECO:0000314"/>
    <property type="project" value="UniProtKB"/>
</dbReference>
<dbReference type="GO" id="GO:0031391">
    <property type="term" value="C:Elg1 RFC-like complex"/>
    <property type="evidence" value="ECO:0000314"/>
    <property type="project" value="UniProtKB"/>
</dbReference>
<dbReference type="GO" id="GO:0070062">
    <property type="term" value="C:extracellular exosome"/>
    <property type="evidence" value="ECO:0007005"/>
    <property type="project" value="UniProtKB"/>
</dbReference>
<dbReference type="GO" id="GO:0005654">
    <property type="term" value="C:nucleoplasm"/>
    <property type="evidence" value="ECO:0000314"/>
    <property type="project" value="HPA"/>
</dbReference>
<dbReference type="GO" id="GO:0005634">
    <property type="term" value="C:nucleus"/>
    <property type="evidence" value="ECO:0000318"/>
    <property type="project" value="GO_Central"/>
</dbReference>
<dbReference type="GO" id="GO:0005524">
    <property type="term" value="F:ATP binding"/>
    <property type="evidence" value="ECO:0000304"/>
    <property type="project" value="ProtInc"/>
</dbReference>
<dbReference type="GO" id="GO:0016887">
    <property type="term" value="F:ATP hydrolysis activity"/>
    <property type="evidence" value="ECO:0007669"/>
    <property type="project" value="InterPro"/>
</dbReference>
<dbReference type="GO" id="GO:0003677">
    <property type="term" value="F:DNA binding"/>
    <property type="evidence" value="ECO:0000318"/>
    <property type="project" value="GO_Central"/>
</dbReference>
<dbReference type="GO" id="GO:0003689">
    <property type="term" value="F:DNA clamp loader activity"/>
    <property type="evidence" value="ECO:0007669"/>
    <property type="project" value="InterPro"/>
</dbReference>
<dbReference type="GO" id="GO:0061860">
    <property type="term" value="F:DNA clamp unloader activity"/>
    <property type="evidence" value="ECO:0000315"/>
    <property type="project" value="UniProtKB"/>
</dbReference>
<dbReference type="GO" id="GO:0140297">
    <property type="term" value="F:DNA-binding transcription factor binding"/>
    <property type="evidence" value="ECO:0007669"/>
    <property type="project" value="Ensembl"/>
</dbReference>
<dbReference type="GO" id="GO:0003690">
    <property type="term" value="F:double-stranded DNA binding"/>
    <property type="evidence" value="ECO:0007669"/>
    <property type="project" value="Ensembl"/>
</dbReference>
<dbReference type="GO" id="GO:0008047">
    <property type="term" value="F:enzyme activator activity"/>
    <property type="evidence" value="ECO:0000304"/>
    <property type="project" value="ProtInc"/>
</dbReference>
<dbReference type="GO" id="GO:0019904">
    <property type="term" value="F:protein domain specific binding"/>
    <property type="evidence" value="ECO:0007669"/>
    <property type="project" value="Ensembl"/>
</dbReference>
<dbReference type="GO" id="GO:0043565">
    <property type="term" value="F:sequence-specific DNA binding"/>
    <property type="evidence" value="ECO:0007669"/>
    <property type="project" value="Ensembl"/>
</dbReference>
<dbReference type="GO" id="GO:0006281">
    <property type="term" value="P:DNA repair"/>
    <property type="evidence" value="ECO:0007669"/>
    <property type="project" value="InterPro"/>
</dbReference>
<dbReference type="GO" id="GO:0006261">
    <property type="term" value="P:DNA-templated DNA replication"/>
    <property type="evidence" value="ECO:0000314"/>
    <property type="project" value="ComplexPortal"/>
</dbReference>
<dbReference type="GO" id="GO:0000122">
    <property type="term" value="P:negative regulation of transcription by RNA polymerase II"/>
    <property type="evidence" value="ECO:0007669"/>
    <property type="project" value="Ensembl"/>
</dbReference>
<dbReference type="GO" id="GO:0045893">
    <property type="term" value="P:positive regulation of DNA-templated transcription"/>
    <property type="evidence" value="ECO:0007669"/>
    <property type="project" value="Ensembl"/>
</dbReference>
<dbReference type="GO" id="GO:0007004">
    <property type="term" value="P:telomere maintenance via telomerase"/>
    <property type="evidence" value="ECO:0000304"/>
    <property type="project" value="ProtInc"/>
</dbReference>
<dbReference type="CDD" id="cd00009">
    <property type="entry name" value="AAA"/>
    <property type="match status" value="1"/>
</dbReference>
<dbReference type="CDD" id="cd17752">
    <property type="entry name" value="BRCT_RFC1"/>
    <property type="match status" value="1"/>
</dbReference>
<dbReference type="CDD" id="cd18140">
    <property type="entry name" value="HLD_clamp_RFC"/>
    <property type="match status" value="1"/>
</dbReference>
<dbReference type="FunFam" id="1.10.8.60:FF:000021">
    <property type="entry name" value="Replication factor C subunit 1"/>
    <property type="match status" value="1"/>
</dbReference>
<dbReference type="FunFam" id="1.20.272.10:FF:000005">
    <property type="entry name" value="Replication factor C subunit 1"/>
    <property type="match status" value="1"/>
</dbReference>
<dbReference type="FunFam" id="3.40.50.10190:FF:000001">
    <property type="entry name" value="Replication factor C subunit 1"/>
    <property type="match status" value="1"/>
</dbReference>
<dbReference type="FunFam" id="3.40.50.300:FF:000395">
    <property type="entry name" value="Replication factor C subunit 1"/>
    <property type="match status" value="1"/>
</dbReference>
<dbReference type="Gene3D" id="1.10.8.60">
    <property type="match status" value="1"/>
</dbReference>
<dbReference type="Gene3D" id="1.20.272.10">
    <property type="match status" value="1"/>
</dbReference>
<dbReference type="Gene3D" id="3.40.50.10190">
    <property type="entry name" value="BRCT domain"/>
    <property type="match status" value="1"/>
</dbReference>
<dbReference type="Gene3D" id="3.40.50.300">
    <property type="entry name" value="P-loop containing nucleotide triphosphate hydrolases"/>
    <property type="match status" value="1"/>
</dbReference>
<dbReference type="InterPro" id="IPR003593">
    <property type="entry name" value="AAA+_ATPase"/>
</dbReference>
<dbReference type="InterPro" id="IPR003959">
    <property type="entry name" value="ATPase_AAA_core"/>
</dbReference>
<dbReference type="InterPro" id="IPR001357">
    <property type="entry name" value="BRCT_dom"/>
</dbReference>
<dbReference type="InterPro" id="IPR036420">
    <property type="entry name" value="BRCT_dom_sf"/>
</dbReference>
<dbReference type="InterPro" id="IPR008921">
    <property type="entry name" value="DNA_pol3_clamp-load_cplx_C"/>
</dbReference>
<dbReference type="InterPro" id="IPR013725">
    <property type="entry name" value="DNA_replication_fac_RFC1_C"/>
</dbReference>
<dbReference type="InterPro" id="IPR027417">
    <property type="entry name" value="P-loop_NTPase"/>
</dbReference>
<dbReference type="InterPro" id="IPR012178">
    <property type="entry name" value="RFC1"/>
</dbReference>
<dbReference type="InterPro" id="IPR047854">
    <property type="entry name" value="RFC_lid"/>
</dbReference>
<dbReference type="PANTHER" id="PTHR23389">
    <property type="entry name" value="CHROMOSOME TRANSMISSION FIDELITY FACTOR 18"/>
    <property type="match status" value="1"/>
</dbReference>
<dbReference type="PANTHER" id="PTHR23389:SF6">
    <property type="entry name" value="REPLICATION FACTOR C SUBUNIT 1"/>
    <property type="match status" value="1"/>
</dbReference>
<dbReference type="Pfam" id="PF00004">
    <property type="entry name" value="AAA"/>
    <property type="match status" value="1"/>
</dbReference>
<dbReference type="Pfam" id="PF25361">
    <property type="entry name" value="AAA_lid_RFC1"/>
    <property type="match status" value="1"/>
</dbReference>
<dbReference type="Pfam" id="PF00533">
    <property type="entry name" value="BRCT"/>
    <property type="match status" value="1"/>
</dbReference>
<dbReference type="Pfam" id="PF08519">
    <property type="entry name" value="RFC1"/>
    <property type="match status" value="1"/>
</dbReference>
<dbReference type="PIRSF" id="PIRSF036578">
    <property type="entry name" value="RFC1"/>
    <property type="match status" value="1"/>
</dbReference>
<dbReference type="SMART" id="SM00382">
    <property type="entry name" value="AAA"/>
    <property type="match status" value="1"/>
</dbReference>
<dbReference type="SMART" id="SM00292">
    <property type="entry name" value="BRCT"/>
    <property type="match status" value="1"/>
</dbReference>
<dbReference type="SUPFAM" id="SSF52113">
    <property type="entry name" value="BRCT domain"/>
    <property type="match status" value="1"/>
</dbReference>
<dbReference type="SUPFAM" id="SSF52540">
    <property type="entry name" value="P-loop containing nucleoside triphosphate hydrolases"/>
    <property type="match status" value="1"/>
</dbReference>
<dbReference type="SUPFAM" id="SSF48019">
    <property type="entry name" value="post-AAA+ oligomerization domain-like"/>
    <property type="match status" value="1"/>
</dbReference>
<dbReference type="PROSITE" id="PS50172">
    <property type="entry name" value="BRCT"/>
    <property type="match status" value="1"/>
</dbReference>
<feature type="chain" id="PRO_0000121772" description="Replication factor C subunit 1">
    <location>
        <begin position="1"/>
        <end position="1148"/>
    </location>
</feature>
<feature type="domain" description="BRCT" evidence="3">
    <location>
        <begin position="402"/>
        <end position="492"/>
    </location>
</feature>
<feature type="region of interest" description="Disordered" evidence="4">
    <location>
        <begin position="46"/>
        <end position="201"/>
    </location>
</feature>
<feature type="region of interest" description="Disordered" evidence="4">
    <location>
        <begin position="228"/>
        <end position="380"/>
    </location>
</feature>
<feature type="region of interest" description="Disordered" evidence="4">
    <location>
        <begin position="496"/>
        <end position="538"/>
    </location>
</feature>
<feature type="region of interest" description="Disordered" evidence="4">
    <location>
        <begin position="1081"/>
        <end position="1148"/>
    </location>
</feature>
<feature type="short sequence motif" description="Nuclear localization signal" evidence="2">
    <location>
        <begin position="1120"/>
        <end position="1124"/>
    </location>
</feature>
<feature type="compositionally biased region" description="Basic and acidic residues" evidence="4">
    <location>
        <begin position="46"/>
        <end position="56"/>
    </location>
</feature>
<feature type="compositionally biased region" description="Polar residues" evidence="4">
    <location>
        <begin position="130"/>
        <end position="141"/>
    </location>
</feature>
<feature type="compositionally biased region" description="Basic and acidic residues" evidence="4">
    <location>
        <begin position="234"/>
        <end position="246"/>
    </location>
</feature>
<feature type="compositionally biased region" description="Basic residues" evidence="4">
    <location>
        <begin position="262"/>
        <end position="271"/>
    </location>
</feature>
<feature type="compositionally biased region" description="Basic and acidic residues" evidence="4">
    <location>
        <begin position="288"/>
        <end position="308"/>
    </location>
</feature>
<feature type="compositionally biased region" description="Basic and acidic residues" evidence="4">
    <location>
        <begin position="323"/>
        <end position="353"/>
    </location>
</feature>
<feature type="compositionally biased region" description="Basic and acidic residues" evidence="4">
    <location>
        <begin position="362"/>
        <end position="376"/>
    </location>
</feature>
<feature type="compositionally biased region" description="Basic and acidic residues" evidence="4">
    <location>
        <begin position="496"/>
        <end position="507"/>
    </location>
</feature>
<feature type="compositionally biased region" description="Basic and acidic residues" evidence="4">
    <location>
        <begin position="520"/>
        <end position="538"/>
    </location>
</feature>
<feature type="compositionally biased region" description="Acidic residues" evidence="4">
    <location>
        <begin position="1094"/>
        <end position="1105"/>
    </location>
</feature>
<feature type="compositionally biased region" description="Basic and acidic residues" evidence="4">
    <location>
        <begin position="1130"/>
        <end position="1140"/>
    </location>
</feature>
<feature type="binding site" evidence="2">
    <location>
        <begin position="650"/>
        <end position="657"/>
    </location>
    <ligand>
        <name>ATP</name>
        <dbReference type="ChEBI" id="CHEBI:30616"/>
    </ligand>
</feature>
<feature type="modified residue" description="Phosphotyrosine" evidence="20 21">
    <location>
        <position position="67"/>
    </location>
</feature>
<feature type="modified residue" description="Phosphoserine" evidence="16 18 19 20 21 22">
    <location>
        <position position="69"/>
    </location>
</feature>
<feature type="modified residue" description="Phosphoserine" evidence="16 18 19 20 21 22">
    <location>
        <position position="71"/>
    </location>
</feature>
<feature type="modified residue" description="Phosphoserine" evidence="18">
    <location>
        <position position="73"/>
    </location>
</feature>
<feature type="modified residue" description="Phosphoserine" evidence="18 20 23">
    <location>
        <position position="108"/>
    </location>
</feature>
<feature type="modified residue" description="Phosphothreonine" evidence="18 20">
    <location>
        <position position="110"/>
    </location>
</feature>
<feature type="modified residue" description="Phosphoserine" evidence="18 19 20 22">
    <location>
        <position position="156"/>
    </location>
</feature>
<feature type="modified residue" description="Phosphothreonine" evidence="18 19 22">
    <location>
        <position position="161"/>
    </location>
</feature>
<feature type="modified residue" description="Phosphothreonine" evidence="19">
    <location>
        <position position="163"/>
    </location>
</feature>
<feature type="modified residue" description="Phosphoserine" evidence="18 19">
    <location>
        <position position="164"/>
    </location>
</feature>
<feature type="modified residue" description="Phosphoserine" evidence="18 19 20">
    <location>
        <position position="173"/>
    </location>
</feature>
<feature type="modified residue" description="Phosphoserine" evidence="17 18 20 21 22">
    <location>
        <position position="190"/>
    </location>
</feature>
<feature type="modified residue" description="Phosphoserine" evidence="1">
    <location>
        <position position="253"/>
    </location>
</feature>
<feature type="modified residue" description="Phosphoserine" evidence="18">
    <location>
        <position position="281"/>
    </location>
</feature>
<feature type="modified residue" description="Phosphoserine" evidence="18">
    <location>
        <position position="283"/>
    </location>
</feature>
<feature type="modified residue" description="Phosphoserine" evidence="18 20">
    <location>
        <position position="312"/>
    </location>
</feature>
<feature type="modified residue" description="Phosphoserine" evidence="20 21">
    <location>
        <position position="368"/>
    </location>
</feature>
<feature type="modified residue" description="Phosphoserine" evidence="1">
    <location>
        <position position="537"/>
    </location>
</feature>
<feature type="modified residue" description="Phosphoserine" evidence="18 22">
    <location>
        <position position="1104"/>
    </location>
</feature>
<feature type="modified residue" description="Phosphoserine" evidence="18">
    <location>
        <position position="1106"/>
    </location>
</feature>
<feature type="cross-link" description="Glycyl lysine isopeptide (Lys-Gly) (interchain with G-Cter in SUMO2)" evidence="24">
    <location>
        <position position="50"/>
    </location>
</feature>
<feature type="splice variant" id="VSP_008443" description="In isoform 2." evidence="13 14">
    <location>
        <position position="630"/>
    </location>
</feature>
<feature type="sequence variant" id="VAR_014860" description="In dbSNP:rs2066791." evidence="12">
    <original>I</original>
    <variation>V</variation>
    <location>
        <position position="598"/>
    </location>
</feature>
<feature type="sequence variant" id="VAR_016986" description="In dbSNP:rs1057747." evidence="7 8 11">
    <original>R</original>
    <variation>L</variation>
    <location>
        <position position="613"/>
    </location>
</feature>
<feature type="sequence variant" id="VAR_020657" description="In dbSNP:rs11932767." evidence="12">
    <original>E</original>
    <variation>D</variation>
    <location>
        <position position="692"/>
    </location>
</feature>
<feature type="sequence variant" id="VAR_020658" description="In dbSNP:rs17335452." evidence="12">
    <original>Q</original>
    <variation>K</variation>
    <location>
        <position position="955"/>
    </location>
</feature>
<feature type="sequence variant" id="VAR_020659" description="In dbSNP:rs17288828." evidence="12">
    <original>S</original>
    <variation>L</variation>
    <location>
        <position position="1146"/>
    </location>
</feature>
<feature type="sequence conflict" description="In Ref. 1; AAA16121." evidence="15" ref="1">
    <original>E</original>
    <variation>K</variation>
    <location>
        <position position="326"/>
    </location>
</feature>
<feature type="sequence conflict" description="In Ref. 8; AAH51786." evidence="15" ref="8">
    <original>S</original>
    <variation>N</variation>
    <location>
        <position position="567"/>
    </location>
</feature>
<feature type="sequence conflict" description="In Ref. 2, 3 and 4." evidence="15" ref="2 3 4">
    <original>A</original>
    <variation>S</variation>
    <location>
        <position position="629"/>
    </location>
</feature>
<feature type="sequence conflict" description="In Ref. 2, 3 and 4." evidence="15" ref="2 3 4">
    <original>G</original>
    <variation>N</variation>
    <location>
        <position position="641"/>
    </location>
</feature>
<feature type="sequence conflict" description="In Ref. 2, 3 and 4." evidence="15" ref="2 3 4">
    <original>A</original>
    <variation>R</variation>
    <location>
        <position position="677"/>
    </location>
</feature>
<feature type="sequence conflict" description="In Ref. 2, 3 and 4." evidence="15" ref="2 3 4">
    <original>S</original>
    <variation>A</variation>
    <location>
        <position position="1076"/>
    </location>
</feature>
<feature type="helix" evidence="26">
    <location>
        <begin position="380"/>
        <end position="386"/>
    </location>
</feature>
<feature type="turn" evidence="26">
    <location>
        <begin position="394"/>
        <end position="396"/>
    </location>
</feature>
<feature type="strand" evidence="25">
    <location>
        <begin position="404"/>
        <end position="407"/>
    </location>
</feature>
<feature type="strand" evidence="25">
    <location>
        <begin position="411"/>
        <end position="414"/>
    </location>
</feature>
<feature type="strand" evidence="25">
    <location>
        <begin position="419"/>
        <end position="421"/>
    </location>
</feature>
<feature type="helix" evidence="25">
    <location>
        <begin position="423"/>
        <end position="432"/>
    </location>
</feature>
<feature type="strand" evidence="26">
    <location>
        <begin position="436"/>
        <end position="440"/>
    </location>
</feature>
<feature type="strand" evidence="25">
    <location>
        <begin position="447"/>
        <end position="450"/>
    </location>
</feature>
<feature type="helix" evidence="25">
    <location>
        <begin position="457"/>
        <end position="465"/>
    </location>
</feature>
<feature type="strand" evidence="25">
    <location>
        <begin position="468"/>
        <end position="471"/>
    </location>
</feature>
<feature type="helix" evidence="25">
    <location>
        <begin position="472"/>
        <end position="481"/>
    </location>
</feature>
<feature type="helix" evidence="27">
    <location>
        <begin position="586"/>
        <end position="589"/>
    </location>
</feature>
<feature type="helix" evidence="27">
    <location>
        <begin position="607"/>
        <end position="616"/>
    </location>
</feature>
<feature type="helix" evidence="27">
    <location>
        <begin position="618"/>
        <end position="620"/>
    </location>
</feature>
<feature type="strand" evidence="27">
    <location>
        <begin position="645"/>
        <end position="650"/>
    </location>
</feature>
<feature type="helix" evidence="27">
    <location>
        <begin position="657"/>
        <end position="667"/>
    </location>
</feature>
<feature type="strand" evidence="27">
    <location>
        <begin position="671"/>
        <end position="675"/>
    </location>
</feature>
<feature type="helix" evidence="27">
    <location>
        <begin position="683"/>
        <end position="689"/>
    </location>
</feature>
<feature type="helix" evidence="27">
    <location>
        <begin position="691"/>
        <end position="694"/>
    </location>
</feature>
<feature type="helix" evidence="27">
    <location>
        <begin position="699"/>
        <end position="701"/>
    </location>
</feature>
<feature type="strand" evidence="27">
    <location>
        <begin position="715"/>
        <end position="719"/>
    </location>
</feature>
<feature type="helix" evidence="27">
    <location>
        <begin position="722"/>
        <end position="724"/>
    </location>
</feature>
<feature type="turn" evidence="27">
    <location>
        <begin position="729"/>
        <end position="732"/>
    </location>
</feature>
<feature type="helix" evidence="27">
    <location>
        <begin position="733"/>
        <end position="742"/>
    </location>
</feature>
<feature type="strand" evidence="27">
    <location>
        <begin position="748"/>
        <end position="751"/>
    </location>
</feature>
<feature type="helix" evidence="27">
    <location>
        <begin position="758"/>
        <end position="761"/>
    </location>
</feature>
<feature type="helix" evidence="27">
    <location>
        <begin position="764"/>
        <end position="766"/>
    </location>
</feature>
<feature type="strand" evidence="27">
    <location>
        <begin position="767"/>
        <end position="771"/>
    </location>
</feature>
<feature type="helix" evidence="27">
    <location>
        <begin position="777"/>
        <end position="791"/>
    </location>
</feature>
<feature type="helix" evidence="27">
    <location>
        <begin position="797"/>
        <end position="806"/>
    </location>
</feature>
<feature type="turn" evidence="27">
    <location>
        <begin position="807"/>
        <end position="809"/>
    </location>
</feature>
<feature type="helix" evidence="27">
    <location>
        <begin position="811"/>
        <end position="826"/>
    </location>
</feature>
<feature type="helix" evidence="27">
    <location>
        <begin position="848"/>
        <end position="854"/>
    </location>
</feature>
<feature type="strand" evidence="27">
    <location>
        <begin position="859"/>
        <end position="861"/>
    </location>
</feature>
<feature type="turn" evidence="27">
    <location>
        <begin position="862"/>
        <end position="864"/>
    </location>
</feature>
<feature type="helix" evidence="27">
    <location>
        <begin position="867"/>
        <end position="875"/>
    </location>
</feature>
<feature type="turn" evidence="27">
    <location>
        <begin position="878"/>
        <end position="880"/>
    </location>
</feature>
<feature type="helix" evidence="27">
    <location>
        <begin position="881"/>
        <end position="888"/>
    </location>
</feature>
<feature type="helix" evidence="27">
    <location>
        <begin position="889"/>
        <end position="891"/>
    </location>
</feature>
<feature type="helix" evidence="27">
    <location>
        <begin position="901"/>
        <end position="927"/>
    </location>
</feature>
<feature type="helix" evidence="27">
    <location>
        <begin position="934"/>
        <end position="941"/>
    </location>
</feature>
<feature type="helix" evidence="27">
    <location>
        <begin position="944"/>
        <end position="948"/>
    </location>
</feature>
<feature type="helix" evidence="27">
    <location>
        <begin position="962"/>
        <end position="981"/>
    </location>
</feature>
<feature type="strand" evidence="27">
    <location>
        <begin position="990"/>
        <end position="992"/>
    </location>
</feature>
<feature type="helix" evidence="27">
    <location>
        <begin position="993"/>
        <end position="1012"/>
    </location>
</feature>
<feature type="turn" evidence="27">
    <location>
        <begin position="1014"/>
        <end position="1016"/>
    </location>
</feature>
<feature type="helix" evidence="27">
    <location>
        <begin position="1017"/>
        <end position="1027"/>
    </location>
</feature>
<feature type="helix" evidence="27">
    <location>
        <begin position="1032"/>
        <end position="1039"/>
    </location>
</feature>
<feature type="helix" evidence="27">
    <location>
        <begin position="1057"/>
        <end position="1065"/>
    </location>
</feature>
<accession>P35251</accession>
<accession>A8K6E7</accession>
<accession>Q5XKF5</accession>
<accession>Q6PKU0</accession>
<accession>Q86V41</accession>
<accession>Q86V46</accession>
<gene>
    <name type="primary">RFC1</name>
    <name type="synonym">RFC140</name>
</gene>
<name>RFC1_HUMAN</name>
<reference key="1">
    <citation type="journal article" date="1993" name="Proc. Natl. Acad. Sci. U.S.A.">
        <title>cDNAs encoding the large subunit of human replication factor C.</title>
        <authorList>
            <person name="Bunz F."/>
            <person name="Kobayashi R."/>
            <person name="Stillman B."/>
        </authorList>
    </citation>
    <scope>NUCLEOTIDE SEQUENCE [MRNA] (ISOFORM 1)</scope>
    <scope>PROTEIN SEQUENCE OF 469-480; 571-580 AND 678-700</scope>
</reference>
<reference key="2">
    <citation type="journal article" date="1993" name="Biochem. Biophys. Res. Commun.">
        <title>Cloning and expression of a novel human DNA binding protein, PO-GA.</title>
        <authorList>
            <person name="Lu Y."/>
            <person name="Zeft A.S."/>
            <person name="Riegel A.T."/>
        </authorList>
    </citation>
    <scope>NUCLEOTIDE SEQUENCE [MRNA] (ISOFORM 2)</scope>
    <scope>VARIANT LEU-613</scope>
</reference>
<reference key="3">
    <citation type="journal article" date="1994" name="Gene">
        <title>The human DNA-binding protein, PO-GA, is homologous to the large subunit of mouse replication factor C: regulation by alternate 3' processing of mRNA.</title>
        <authorList>
            <person name="Lu Y."/>
            <person name="Riegel A.T."/>
        </authorList>
    </citation>
    <scope>NUCLEOTIDE SEQUENCE (ISOFORM 2)</scope>
    <scope>VARIANT LEU-613</scope>
</reference>
<reference key="4">
    <citation type="submission" date="1998-02" db="EMBL/GenBank/DDBJ databases">
        <title>Molecular cloning of a DNA binding protein from human hepatoma cells.</title>
        <authorList>
            <person name="Rajavashisth T.B."/>
            <person name="Tripathi S."/>
        </authorList>
    </citation>
    <scope>NUCLEOTIDE SEQUENCE (ISOFORM 2)</scope>
    <scope>VARIANT LEU-613</scope>
    <source>
        <tissue>Hepatoma</tissue>
    </source>
</reference>
<reference key="5">
    <citation type="submission" date="2004-04" db="EMBL/GenBank/DDBJ databases">
        <authorList>
            <consortium name="NIEHS SNPs program"/>
        </authorList>
    </citation>
    <scope>NUCLEOTIDE SEQUENCE [GENOMIC DNA]</scope>
    <scope>VARIANTS VAL-598; ASP-692; LYS-955 AND LEU-1146</scope>
</reference>
<reference key="6">
    <citation type="journal article" date="2004" name="Nat. Genet.">
        <title>Complete sequencing and characterization of 21,243 full-length human cDNAs.</title>
        <authorList>
            <person name="Ota T."/>
            <person name="Suzuki Y."/>
            <person name="Nishikawa T."/>
            <person name="Otsuki T."/>
            <person name="Sugiyama T."/>
            <person name="Irie R."/>
            <person name="Wakamatsu A."/>
            <person name="Hayashi K."/>
            <person name="Sato H."/>
            <person name="Nagai K."/>
            <person name="Kimura K."/>
            <person name="Makita H."/>
            <person name="Sekine M."/>
            <person name="Obayashi M."/>
            <person name="Nishi T."/>
            <person name="Shibahara T."/>
            <person name="Tanaka T."/>
            <person name="Ishii S."/>
            <person name="Yamamoto J."/>
            <person name="Saito K."/>
            <person name="Kawai Y."/>
            <person name="Isono Y."/>
            <person name="Nakamura Y."/>
            <person name="Nagahari K."/>
            <person name="Murakami K."/>
            <person name="Yasuda T."/>
            <person name="Iwayanagi T."/>
            <person name="Wagatsuma M."/>
            <person name="Shiratori A."/>
            <person name="Sudo H."/>
            <person name="Hosoiri T."/>
            <person name="Kaku Y."/>
            <person name="Kodaira H."/>
            <person name="Kondo H."/>
            <person name="Sugawara M."/>
            <person name="Takahashi M."/>
            <person name="Kanda K."/>
            <person name="Yokoi T."/>
            <person name="Furuya T."/>
            <person name="Kikkawa E."/>
            <person name="Omura Y."/>
            <person name="Abe K."/>
            <person name="Kamihara K."/>
            <person name="Katsuta N."/>
            <person name="Sato K."/>
            <person name="Tanikawa M."/>
            <person name="Yamazaki M."/>
            <person name="Ninomiya K."/>
            <person name="Ishibashi T."/>
            <person name="Yamashita H."/>
            <person name="Murakawa K."/>
            <person name="Fujimori K."/>
            <person name="Tanai H."/>
            <person name="Kimata M."/>
            <person name="Watanabe M."/>
            <person name="Hiraoka S."/>
            <person name="Chiba Y."/>
            <person name="Ishida S."/>
            <person name="Ono Y."/>
            <person name="Takiguchi S."/>
            <person name="Watanabe S."/>
            <person name="Yosida M."/>
            <person name="Hotuta T."/>
            <person name="Kusano J."/>
            <person name="Kanehori K."/>
            <person name="Takahashi-Fujii A."/>
            <person name="Hara H."/>
            <person name="Tanase T.-O."/>
            <person name="Nomura Y."/>
            <person name="Togiya S."/>
            <person name="Komai F."/>
            <person name="Hara R."/>
            <person name="Takeuchi K."/>
            <person name="Arita M."/>
            <person name="Imose N."/>
            <person name="Musashino K."/>
            <person name="Yuuki H."/>
            <person name="Oshima A."/>
            <person name="Sasaki N."/>
            <person name="Aotsuka S."/>
            <person name="Yoshikawa Y."/>
            <person name="Matsunawa H."/>
            <person name="Ichihara T."/>
            <person name="Shiohata N."/>
            <person name="Sano S."/>
            <person name="Moriya S."/>
            <person name="Momiyama H."/>
            <person name="Satoh N."/>
            <person name="Takami S."/>
            <person name="Terashima Y."/>
            <person name="Suzuki O."/>
            <person name="Nakagawa S."/>
            <person name="Senoh A."/>
            <person name="Mizoguchi H."/>
            <person name="Goto Y."/>
            <person name="Shimizu F."/>
            <person name="Wakebe H."/>
            <person name="Hishigaki H."/>
            <person name="Watanabe T."/>
            <person name="Sugiyama A."/>
            <person name="Takemoto M."/>
            <person name="Kawakami B."/>
            <person name="Yamazaki M."/>
            <person name="Watanabe K."/>
            <person name="Kumagai A."/>
            <person name="Itakura S."/>
            <person name="Fukuzumi Y."/>
            <person name="Fujimori Y."/>
            <person name="Komiyama M."/>
            <person name="Tashiro H."/>
            <person name="Tanigami A."/>
            <person name="Fujiwara T."/>
            <person name="Ono T."/>
            <person name="Yamada K."/>
            <person name="Fujii Y."/>
            <person name="Ozaki K."/>
            <person name="Hirao M."/>
            <person name="Ohmori Y."/>
            <person name="Kawabata A."/>
            <person name="Hikiji T."/>
            <person name="Kobatake N."/>
            <person name="Inagaki H."/>
            <person name="Ikema Y."/>
            <person name="Okamoto S."/>
            <person name="Okitani R."/>
            <person name="Kawakami T."/>
            <person name="Noguchi S."/>
            <person name="Itoh T."/>
            <person name="Shigeta K."/>
            <person name="Senba T."/>
            <person name="Matsumura K."/>
            <person name="Nakajima Y."/>
            <person name="Mizuno T."/>
            <person name="Morinaga M."/>
            <person name="Sasaki M."/>
            <person name="Togashi T."/>
            <person name="Oyama M."/>
            <person name="Hata H."/>
            <person name="Watanabe M."/>
            <person name="Komatsu T."/>
            <person name="Mizushima-Sugano J."/>
            <person name="Satoh T."/>
            <person name="Shirai Y."/>
            <person name="Takahashi Y."/>
            <person name="Nakagawa K."/>
            <person name="Okumura K."/>
            <person name="Nagase T."/>
            <person name="Nomura N."/>
            <person name="Kikuchi H."/>
            <person name="Masuho Y."/>
            <person name="Yamashita R."/>
            <person name="Nakai K."/>
            <person name="Yada T."/>
            <person name="Nakamura Y."/>
            <person name="Ohara O."/>
            <person name="Isogai T."/>
            <person name="Sugano S."/>
        </authorList>
    </citation>
    <scope>NUCLEOTIDE SEQUENCE [LARGE SCALE MRNA] (ISOFORM 1)</scope>
    <source>
        <tissue>Placenta</tissue>
    </source>
</reference>
<reference key="7">
    <citation type="submission" date="2005-07" db="EMBL/GenBank/DDBJ databases">
        <authorList>
            <person name="Mural R.J."/>
            <person name="Istrail S."/>
            <person name="Sutton G.G."/>
            <person name="Florea L."/>
            <person name="Halpern A.L."/>
            <person name="Mobarry C.M."/>
            <person name="Lippert R."/>
            <person name="Walenz B."/>
            <person name="Shatkay H."/>
            <person name="Dew I."/>
            <person name="Miller J.R."/>
            <person name="Flanigan M.J."/>
            <person name="Edwards N.J."/>
            <person name="Bolanos R."/>
            <person name="Fasulo D."/>
            <person name="Halldorsson B.V."/>
            <person name="Hannenhalli S."/>
            <person name="Turner R."/>
            <person name="Yooseph S."/>
            <person name="Lu F."/>
            <person name="Nusskern D.R."/>
            <person name="Shue B.C."/>
            <person name="Zheng X.H."/>
            <person name="Zhong F."/>
            <person name="Delcher A.L."/>
            <person name="Huson D.H."/>
            <person name="Kravitz S.A."/>
            <person name="Mouchard L."/>
            <person name="Reinert K."/>
            <person name="Remington K.A."/>
            <person name="Clark A.G."/>
            <person name="Waterman M.S."/>
            <person name="Eichler E.E."/>
            <person name="Adams M.D."/>
            <person name="Hunkapiller M.W."/>
            <person name="Myers E.W."/>
            <person name="Venter J.C."/>
        </authorList>
    </citation>
    <scope>NUCLEOTIDE SEQUENCE [LARGE SCALE GENOMIC DNA]</scope>
</reference>
<reference key="8">
    <citation type="journal article" date="2004" name="Genome Res.">
        <title>The status, quality, and expansion of the NIH full-length cDNA project: the Mammalian Gene Collection (MGC).</title>
        <authorList>
            <consortium name="The MGC Project Team"/>
        </authorList>
    </citation>
    <scope>NUCLEOTIDE SEQUENCE [LARGE SCALE MRNA] (ISOFORMS 1 AND 2)</scope>
    <source>
        <tissue>Skin</tissue>
        <tissue>Testis</tissue>
        <tissue>Uterus</tissue>
    </source>
</reference>
<reference key="9">
    <citation type="journal article" date="1997" name="J. Biol. Chem.">
        <title>Replication factor C interacts with the C-terminal side of proliferating cell nuclear antigen.</title>
        <authorList>
            <person name="Mossi R."/>
            <person name="Jonsson Z.O."/>
            <person name="Allen B.L."/>
            <person name="Hardin S.H."/>
            <person name="Huebscher U."/>
        </authorList>
    </citation>
    <scope>FUNCTION</scope>
    <scope>INTERACTION WITH PCNA</scope>
</reference>
<reference key="10">
    <citation type="journal article" date="1998" name="J. Biol. Chem.">
        <title>Reconstitution of recombinant human replication factor C (RFC) and identification of an RFC subcomplex possessing DNA-dependent ATPase activity.</title>
        <authorList>
            <person name="Ellison V."/>
            <person name="Stillman B."/>
        </authorList>
    </citation>
    <scope>FUNCTION</scope>
    <scope>SUBUNIT</scope>
</reference>
<reference key="11">
    <citation type="journal article" date="1998" name="Nucleic Acids Res.">
        <title>DNA recognition properties of the N-terminal DNA binding domain within the large subunit of replication factor C.</title>
        <authorList>
            <person name="Allen B.L."/>
            <person name="Uhlmann F."/>
            <person name="Gaur L.K."/>
            <person name="Mulder B.A."/>
            <person name="Posey K.L."/>
            <person name="Jones L.B."/>
            <person name="Hardin S.H."/>
        </authorList>
    </citation>
    <scope>DNA-BINDING</scope>
</reference>
<reference key="12">
    <citation type="journal article" date="2006" name="Cell">
        <title>Global, in vivo, and site-specific phosphorylation dynamics in signaling networks.</title>
        <authorList>
            <person name="Olsen J.V."/>
            <person name="Blagoev B."/>
            <person name="Gnad F."/>
            <person name="Macek B."/>
            <person name="Kumar C."/>
            <person name="Mortensen P."/>
            <person name="Mann M."/>
        </authorList>
    </citation>
    <scope>IDENTIFICATION BY MASS SPECTROMETRY [LARGE SCALE ANALYSIS]</scope>
    <source>
        <tissue>Cervix carcinoma</tissue>
    </source>
</reference>
<reference key="13">
    <citation type="journal article" date="2006" name="Nat. Biotechnol.">
        <title>A probability-based approach for high-throughput protein phosphorylation analysis and site localization.</title>
        <authorList>
            <person name="Beausoleil S.A."/>
            <person name="Villen J."/>
            <person name="Gerber S.A."/>
            <person name="Rush J."/>
            <person name="Gygi S.P."/>
        </authorList>
    </citation>
    <scope>PHOSPHORYLATION [LARGE SCALE ANALYSIS] AT SER-69 AND SER-71</scope>
    <scope>IDENTIFICATION BY MASS SPECTROMETRY [LARGE SCALE ANALYSIS]</scope>
    <source>
        <tissue>Cervix carcinoma</tissue>
    </source>
</reference>
<reference key="14">
    <citation type="journal article" date="2007" name="Science">
        <title>ATM and ATR substrate analysis reveals extensive protein networks responsive to DNA damage.</title>
        <authorList>
            <person name="Matsuoka S."/>
            <person name="Ballif B.A."/>
            <person name="Smogorzewska A."/>
            <person name="McDonald E.R. III"/>
            <person name="Hurov K.E."/>
            <person name="Luo J."/>
            <person name="Bakalarski C.E."/>
            <person name="Zhao Z."/>
            <person name="Solimini N."/>
            <person name="Lerenthal Y."/>
            <person name="Shiloh Y."/>
            <person name="Gygi S.P."/>
            <person name="Elledge S.J."/>
        </authorList>
    </citation>
    <scope>PHOSPHORYLATION [LARGE SCALE ANALYSIS] AT SER-190</scope>
    <scope>IDENTIFICATION BY MASS SPECTROMETRY [LARGE SCALE ANALYSIS]</scope>
    <source>
        <tissue>Embryonic kidney</tissue>
    </source>
</reference>
<reference key="15">
    <citation type="journal article" date="2008" name="Proc. Natl. Acad. Sci. U.S.A.">
        <title>A quantitative atlas of mitotic phosphorylation.</title>
        <authorList>
            <person name="Dephoure N."/>
            <person name="Zhou C."/>
            <person name="Villen J."/>
            <person name="Beausoleil S.A."/>
            <person name="Bakalarski C.E."/>
            <person name="Elledge S.J."/>
            <person name="Gygi S.P."/>
        </authorList>
    </citation>
    <scope>PHOSPHORYLATION [LARGE SCALE ANALYSIS] AT SER-69; SER-71; SER-73; SER-108; THR-110; SER-156; THR-161; SER-164; SER-173; SER-190; SER-281; SER-283; SER-312; SER-1104 AND SER-1106</scope>
    <scope>IDENTIFICATION BY MASS SPECTROMETRY [LARGE SCALE ANALYSIS]</scope>
    <source>
        <tissue>Cervix carcinoma</tissue>
    </source>
</reference>
<reference key="16">
    <citation type="journal article" date="2009" name="Anal. Chem.">
        <title>Lys-N and trypsin cover complementary parts of the phosphoproteome in a refined SCX-based approach.</title>
        <authorList>
            <person name="Gauci S."/>
            <person name="Helbig A.O."/>
            <person name="Slijper M."/>
            <person name="Krijgsveld J."/>
            <person name="Heck A.J."/>
            <person name="Mohammed S."/>
        </authorList>
    </citation>
    <scope>IDENTIFICATION BY MASS SPECTROMETRY [LARGE SCALE ANALYSIS]</scope>
</reference>
<reference key="17">
    <citation type="journal article" date="2009" name="Sci. Signal.">
        <title>Quantitative phosphoproteomic analysis of T cell receptor signaling reveals system-wide modulation of protein-protein interactions.</title>
        <authorList>
            <person name="Mayya V."/>
            <person name="Lundgren D.H."/>
            <person name="Hwang S.-I."/>
            <person name="Rezaul K."/>
            <person name="Wu L."/>
            <person name="Eng J.K."/>
            <person name="Rodionov V."/>
            <person name="Han D.K."/>
        </authorList>
    </citation>
    <scope>PHOSPHORYLATION [LARGE SCALE ANALYSIS] AT SER-69; SER-71; SER-156; THR-161; THR-163; SER-164 AND SER-173</scope>
    <scope>IDENTIFICATION BY MASS SPECTROMETRY [LARGE SCALE ANALYSIS]</scope>
    <source>
        <tissue>Leukemic T-cell</tissue>
    </source>
</reference>
<reference key="18">
    <citation type="journal article" date="2010" name="Sci. Signal.">
        <title>Quantitative phosphoproteomics reveals widespread full phosphorylation site occupancy during mitosis.</title>
        <authorList>
            <person name="Olsen J.V."/>
            <person name="Vermeulen M."/>
            <person name="Santamaria A."/>
            <person name="Kumar C."/>
            <person name="Miller M.L."/>
            <person name="Jensen L.J."/>
            <person name="Gnad F."/>
            <person name="Cox J."/>
            <person name="Jensen T.S."/>
            <person name="Nigg E.A."/>
            <person name="Brunak S."/>
            <person name="Mann M."/>
        </authorList>
    </citation>
    <scope>PHOSPHORYLATION [LARGE SCALE ANALYSIS] AT TYR-67; SER-69; SER-71; SER-108; THR-110; SER-156; SER-173; SER-190; SER-312 AND SER-368</scope>
    <scope>IDENTIFICATION BY MASS SPECTROMETRY [LARGE SCALE ANALYSIS]</scope>
    <source>
        <tissue>Cervix carcinoma</tissue>
    </source>
</reference>
<reference key="19">
    <citation type="journal article" date="2011" name="BMC Syst. Biol.">
        <title>Initial characterization of the human central proteome.</title>
        <authorList>
            <person name="Burkard T.R."/>
            <person name="Planyavsky M."/>
            <person name="Kaupe I."/>
            <person name="Breitwieser F.P."/>
            <person name="Buerckstuemmer T."/>
            <person name="Bennett K.L."/>
            <person name="Superti-Furga G."/>
            <person name="Colinge J."/>
        </authorList>
    </citation>
    <scope>IDENTIFICATION BY MASS SPECTROMETRY [LARGE SCALE ANALYSIS]</scope>
</reference>
<reference key="20">
    <citation type="journal article" date="2011" name="Sci. Signal.">
        <title>System-wide temporal characterization of the proteome and phosphoproteome of human embryonic stem cell differentiation.</title>
        <authorList>
            <person name="Rigbolt K.T."/>
            <person name="Prokhorova T.A."/>
            <person name="Akimov V."/>
            <person name="Henningsen J."/>
            <person name="Johansen P.T."/>
            <person name="Kratchmarova I."/>
            <person name="Kassem M."/>
            <person name="Mann M."/>
            <person name="Olsen J.V."/>
            <person name="Blagoev B."/>
        </authorList>
    </citation>
    <scope>PHOSPHORYLATION [LARGE SCALE ANALYSIS] AT TYR-67; SER-69; SER-71; SER-190 AND SER-368</scope>
    <scope>IDENTIFICATION BY MASS SPECTROMETRY [LARGE SCALE ANALYSIS]</scope>
</reference>
<reference key="21">
    <citation type="journal article" date="2013" name="J. Proteome Res.">
        <title>Toward a comprehensive characterization of a human cancer cell phosphoproteome.</title>
        <authorList>
            <person name="Zhou H."/>
            <person name="Di Palma S."/>
            <person name="Preisinger C."/>
            <person name="Peng M."/>
            <person name="Polat A.N."/>
            <person name="Heck A.J."/>
            <person name="Mohammed S."/>
        </authorList>
    </citation>
    <scope>PHOSPHORYLATION [LARGE SCALE ANALYSIS] AT SER-69; SER-71; SER-156; THR-161; SER-190 AND SER-1104</scope>
    <scope>IDENTIFICATION BY MASS SPECTROMETRY [LARGE SCALE ANALYSIS]</scope>
    <source>
        <tissue>Erythroleukemia</tissue>
    </source>
</reference>
<reference key="22">
    <citation type="journal article" date="2014" name="J. Proteomics">
        <title>An enzyme assisted RP-RPLC approach for in-depth analysis of human liver phosphoproteome.</title>
        <authorList>
            <person name="Bian Y."/>
            <person name="Song C."/>
            <person name="Cheng K."/>
            <person name="Dong M."/>
            <person name="Wang F."/>
            <person name="Huang J."/>
            <person name="Sun D."/>
            <person name="Wang L."/>
            <person name="Ye M."/>
            <person name="Zou H."/>
        </authorList>
    </citation>
    <scope>PHOSPHORYLATION [LARGE SCALE ANALYSIS] AT SER-108</scope>
    <scope>IDENTIFICATION BY MASS SPECTROMETRY [LARGE SCALE ANALYSIS]</scope>
    <source>
        <tissue>Liver</tissue>
    </source>
</reference>
<reference key="23">
    <citation type="journal article" date="2015" name="Cell Rep.">
        <title>SUMO-2 orchestrates chromatin modifiers in response to DNA damage.</title>
        <authorList>
            <person name="Hendriks I.A."/>
            <person name="Treffers L.W."/>
            <person name="Verlaan-de Vries M."/>
            <person name="Olsen J.V."/>
            <person name="Vertegaal A.C."/>
        </authorList>
    </citation>
    <scope>SUMOYLATION [LARGE SCALE ANALYSIS] AT LYS-50</scope>
    <scope>IDENTIFICATION BY MASS SPECTROMETRY [LARGE SCALE ANALYSIS]</scope>
</reference>
<reference key="24">
    <citation type="journal article" date="2019" name="Am. J. Hum. Genet.">
        <title>Bioinformatics-Based Identification of Expanded Repeats: A Non-reference Intronic Pentamer Expansion in RFC1 Causes CANVAS.</title>
        <authorList>
            <person name="Rafehi H."/>
            <person name="Szmulewicz D.J."/>
            <person name="Bennett M.F."/>
            <person name="Sobreira N.L.M."/>
            <person name="Pope K."/>
            <person name="Smith K.R."/>
            <person name="Gillies G."/>
            <person name="Diakumis P."/>
            <person name="Dolzhenko E."/>
            <person name="Eberle M.A."/>
            <person name="Barcina M.G."/>
            <person name="Breen D.P."/>
            <person name="Chancellor A.M."/>
            <person name="Cremer P.D."/>
            <person name="Delatycki M.B."/>
            <person name="Fogel B.L."/>
            <person name="Hackett A."/>
            <person name="Halmagyi G.M."/>
            <person name="Kapetanovic S."/>
            <person name="Lang A."/>
            <person name="Mossman S."/>
            <person name="Mu W."/>
            <person name="Patrikios P."/>
            <person name="Perlman S.L."/>
            <person name="Rosemergy I."/>
            <person name="Storey E."/>
            <person name="Watson S.R.D."/>
            <person name="Wilson M.A."/>
            <person name="Zee D.S."/>
            <person name="Valle D."/>
            <person name="Amor D.J."/>
            <person name="Bahlo M."/>
            <person name="Lockhart P.J."/>
        </authorList>
    </citation>
    <scope>INVOLVEMENT IN CANVAS</scope>
</reference>
<reference key="25">
    <citation type="journal article" date="2019" name="Nat. Genet.">
        <title>Biallelic expansion of an intronic repeat in RFC1 is a common cause of late-onset ataxia.</title>
        <authorList>
            <person name="Cortese A."/>
            <person name="Simone R."/>
            <person name="Sullivan R."/>
            <person name="Vandrovcova J."/>
            <person name="Tariq H."/>
            <person name="Yau W.Y."/>
            <person name="Humphrey J."/>
            <person name="Jaunmuktane Z."/>
            <person name="Sivakumar P."/>
            <person name="Polke J."/>
            <person name="Ilyas M."/>
            <person name="Tribollet E."/>
            <person name="Tomaselli P.J."/>
            <person name="Devigili G."/>
            <person name="Callegari I."/>
            <person name="Versino M."/>
            <person name="Salpietro V."/>
            <person name="Efthymiou S."/>
            <person name="Kaski D."/>
            <person name="Wood N.W."/>
            <person name="Andrade N.S."/>
            <person name="Buglo E."/>
            <person name="Rebelo A."/>
            <person name="Rossor A.M."/>
            <person name="Bronstein A."/>
            <person name="Fratta P."/>
            <person name="Marques W.J."/>
            <person name="Zuechner S."/>
            <person name="Reilly M.M."/>
            <person name="Houlden H."/>
        </authorList>
    </citation>
    <scope>INVOLVEMENT IN CANVAS</scope>
</reference>
<reference key="26">
    <citation type="submission" date="2007-08" db="PDB data bank">
        <title>Solution structure of the BRCT domain from human replication factor C large subunit 1.</title>
        <authorList>
            <consortium name="RIKEN structural genomics initiative (RSGI)"/>
        </authorList>
    </citation>
    <scope>STRUCTURE BY NMR OF 392-496</scope>
</reference>
<keyword id="KW-0002">3D-structure</keyword>
<keyword id="KW-0010">Activator</keyword>
<keyword id="KW-0025">Alternative splicing</keyword>
<keyword id="KW-0067">ATP-binding</keyword>
<keyword id="KW-0903">Direct protein sequencing</keyword>
<keyword id="KW-0235">DNA replication</keyword>
<keyword id="KW-0238">DNA-binding</keyword>
<keyword id="KW-1017">Isopeptide bond</keyword>
<keyword id="KW-0622">Neuropathy</keyword>
<keyword id="KW-0547">Nucleotide-binding</keyword>
<keyword id="KW-0539">Nucleus</keyword>
<keyword id="KW-0597">Phosphoprotein</keyword>
<keyword id="KW-1267">Proteomics identification</keyword>
<keyword id="KW-1185">Reference proteome</keyword>
<keyword id="KW-0804">Transcription</keyword>
<keyword id="KW-0805">Transcription regulation</keyword>
<keyword id="KW-0832">Ubl conjugation</keyword>
<evidence type="ECO:0000250" key="1">
    <source>
        <dbReference type="UniProtKB" id="P35601"/>
    </source>
</evidence>
<evidence type="ECO:0000255" key="2"/>
<evidence type="ECO:0000255" key="3">
    <source>
        <dbReference type="PROSITE-ProRule" id="PRU00033"/>
    </source>
</evidence>
<evidence type="ECO:0000256" key="4">
    <source>
        <dbReference type="SAM" id="MobiDB-lite"/>
    </source>
</evidence>
<evidence type="ECO:0000269" key="5">
    <source>
    </source>
</evidence>
<evidence type="ECO:0000269" key="6">
    <source>
    </source>
</evidence>
<evidence type="ECO:0000269" key="7">
    <source>
    </source>
</evidence>
<evidence type="ECO:0000269" key="8">
    <source>
    </source>
</evidence>
<evidence type="ECO:0000269" key="9">
    <source>
    </source>
</evidence>
<evidence type="ECO:0000269" key="10">
    <source>
    </source>
</evidence>
<evidence type="ECO:0000269" key="11">
    <source ref="4"/>
</evidence>
<evidence type="ECO:0000269" key="12">
    <source ref="5"/>
</evidence>
<evidence type="ECO:0000303" key="13">
    <source>
    </source>
</evidence>
<evidence type="ECO:0000303" key="14">
    <source>
    </source>
</evidence>
<evidence type="ECO:0000305" key="15"/>
<evidence type="ECO:0007744" key="16">
    <source>
    </source>
</evidence>
<evidence type="ECO:0007744" key="17">
    <source>
    </source>
</evidence>
<evidence type="ECO:0007744" key="18">
    <source>
    </source>
</evidence>
<evidence type="ECO:0007744" key="19">
    <source>
    </source>
</evidence>
<evidence type="ECO:0007744" key="20">
    <source>
    </source>
</evidence>
<evidence type="ECO:0007744" key="21">
    <source>
    </source>
</evidence>
<evidence type="ECO:0007744" key="22">
    <source>
    </source>
</evidence>
<evidence type="ECO:0007744" key="23">
    <source>
    </source>
</evidence>
<evidence type="ECO:0007744" key="24">
    <source>
    </source>
</evidence>
<evidence type="ECO:0007829" key="25">
    <source>
        <dbReference type="PDB" id="2EBU"/>
    </source>
</evidence>
<evidence type="ECO:0007829" key="26">
    <source>
        <dbReference type="PDB" id="2K6G"/>
    </source>
</evidence>
<evidence type="ECO:0007829" key="27">
    <source>
        <dbReference type="PDB" id="6VVO"/>
    </source>
</evidence>